<name>MCSA_BACSU</name>
<evidence type="ECO:0000255" key="1">
    <source>
        <dbReference type="PROSITE-ProRule" id="PRU00217"/>
    </source>
</evidence>
<evidence type="ECO:0000269" key="2">
    <source>
    </source>
</evidence>
<evidence type="ECO:0000269" key="3">
    <source>
    </source>
</evidence>
<evidence type="ECO:0000269" key="4">
    <source>
    </source>
</evidence>
<evidence type="ECO:0000269" key="5">
    <source>
    </source>
</evidence>
<evidence type="ECO:0000269" key="6">
    <source>
    </source>
</evidence>
<evidence type="ECO:0007829" key="7">
    <source>
        <dbReference type="PDB" id="8WTB"/>
    </source>
</evidence>
<protein>
    <recommendedName>
        <fullName>Protein-arginine kinase activator protein</fullName>
    </recommendedName>
</protein>
<dbReference type="EMBL" id="D26185">
    <property type="protein sequence ID" value="BAA05318.1"/>
    <property type="molecule type" value="Genomic_DNA"/>
</dbReference>
<dbReference type="EMBL" id="AL009126">
    <property type="protein sequence ID" value="CAB11860.1"/>
    <property type="molecule type" value="Genomic_DNA"/>
</dbReference>
<dbReference type="PIR" id="S66113">
    <property type="entry name" value="S66113"/>
</dbReference>
<dbReference type="RefSeq" id="NP_387965.1">
    <property type="nucleotide sequence ID" value="NC_000964.3"/>
</dbReference>
<dbReference type="RefSeq" id="WP_009966297.1">
    <property type="nucleotide sequence ID" value="NZ_OZ025638.1"/>
</dbReference>
<dbReference type="PDB" id="8WTB">
    <property type="method" value="X-ray"/>
    <property type="resolution" value="2.90 A"/>
    <property type="chains" value="B/D=1-185"/>
</dbReference>
<dbReference type="PDB" id="8WTC">
    <property type="method" value="X-ray"/>
    <property type="resolution" value="2.80 A"/>
    <property type="chains" value="B/D=1-185"/>
</dbReference>
<dbReference type="PDBsum" id="8WTB"/>
<dbReference type="PDBsum" id="8WTC"/>
<dbReference type="SMR" id="P37569"/>
<dbReference type="FunCoup" id="P37569">
    <property type="interactions" value="52"/>
</dbReference>
<dbReference type="STRING" id="224308.BSU00840"/>
<dbReference type="iPTMnet" id="P37569"/>
<dbReference type="PaxDb" id="224308-BSU00840"/>
<dbReference type="EnsemblBacteria" id="CAB11860">
    <property type="protein sequence ID" value="CAB11860"/>
    <property type="gene ID" value="BSU_00840"/>
</dbReference>
<dbReference type="GeneID" id="936845"/>
<dbReference type="KEGG" id="bsu:BSU00840"/>
<dbReference type="PATRIC" id="fig|224308.179.peg.85"/>
<dbReference type="eggNOG" id="COG3880">
    <property type="taxonomic scope" value="Bacteria"/>
</dbReference>
<dbReference type="InParanoid" id="P37569"/>
<dbReference type="OrthoDB" id="9788704at2"/>
<dbReference type="PhylomeDB" id="P37569"/>
<dbReference type="BioCyc" id="BSUB:BSU00840-MONOMER"/>
<dbReference type="Proteomes" id="UP000001570">
    <property type="component" value="Chromosome"/>
</dbReference>
<dbReference type="GO" id="GO:0046870">
    <property type="term" value="F:cadmium ion binding"/>
    <property type="evidence" value="ECO:0000318"/>
    <property type="project" value="GO_Central"/>
</dbReference>
<dbReference type="GO" id="GO:0050897">
    <property type="term" value="F:cobalt ion binding"/>
    <property type="evidence" value="ECO:0000318"/>
    <property type="project" value="GO_Central"/>
</dbReference>
<dbReference type="GO" id="GO:0005507">
    <property type="term" value="F:copper ion binding"/>
    <property type="evidence" value="ECO:0000318"/>
    <property type="project" value="GO_Central"/>
</dbReference>
<dbReference type="GO" id="GO:0008270">
    <property type="term" value="F:zinc ion binding"/>
    <property type="evidence" value="ECO:0000318"/>
    <property type="project" value="GO_Central"/>
</dbReference>
<dbReference type="GO" id="GO:0006508">
    <property type="term" value="P:proteolysis"/>
    <property type="evidence" value="ECO:0000315"/>
    <property type="project" value="CACAO"/>
</dbReference>
<dbReference type="GO" id="GO:1990170">
    <property type="term" value="P:stress response to cadmium ion"/>
    <property type="evidence" value="ECO:0000318"/>
    <property type="project" value="GO_Central"/>
</dbReference>
<dbReference type="GO" id="GO:1990169">
    <property type="term" value="P:stress response to copper ion"/>
    <property type="evidence" value="ECO:0000318"/>
    <property type="project" value="GO_Central"/>
</dbReference>
<dbReference type="Gene3D" id="4.10.860.10">
    <property type="entry name" value="UVR domain"/>
    <property type="match status" value="1"/>
</dbReference>
<dbReference type="InterPro" id="IPR001943">
    <property type="entry name" value="UVR_dom"/>
</dbReference>
<dbReference type="InterPro" id="IPR036876">
    <property type="entry name" value="UVR_dom_sf"/>
</dbReference>
<dbReference type="InterPro" id="IPR025542">
    <property type="entry name" value="YacH"/>
</dbReference>
<dbReference type="PANTHER" id="PTHR38430">
    <property type="entry name" value="PROTEIN-ARGININE KINASE ACTIVATOR PROTEIN"/>
    <property type="match status" value="1"/>
</dbReference>
<dbReference type="PANTHER" id="PTHR38430:SF1">
    <property type="entry name" value="PROTEIN-ARGININE KINASE ACTIVATOR PROTEIN"/>
    <property type="match status" value="1"/>
</dbReference>
<dbReference type="Pfam" id="PF02151">
    <property type="entry name" value="UVR"/>
    <property type="match status" value="1"/>
</dbReference>
<dbReference type="PIRSF" id="PIRSF015034">
    <property type="entry name" value="YacH"/>
    <property type="match status" value="1"/>
</dbReference>
<dbReference type="SUPFAM" id="SSF46600">
    <property type="entry name" value="C-terminal UvrC-binding domain of UvrB"/>
    <property type="match status" value="1"/>
</dbReference>
<dbReference type="PROSITE" id="PS50151">
    <property type="entry name" value="UVR"/>
    <property type="match status" value="1"/>
</dbReference>
<proteinExistence type="evidence at protein level"/>
<sequence length="185" mass="21023">MICQECHERPATFHFTKVVNGEKIEVHICEQCAKENSDSYGISANQGFSIHNLLSGLLNMDSSFQNAGTQMFSHSEQISACPKCGMTFQQFRKIGRFGCSECYKTFHSNITPILRKVHSGNTVHAGKIPKRIGGNLHVRRQIDMLKKELESLIHQEEFENAAHVRDQIRLLEQSLKSTDSEEEQE</sequence>
<feature type="chain" id="PRO_0000049449" description="Protein-arginine kinase activator protein">
    <location>
        <begin position="1"/>
        <end position="185"/>
    </location>
</feature>
<feature type="domain" description="UVR" evidence="1">
    <location>
        <begin position="139"/>
        <end position="174"/>
    </location>
</feature>
<feature type="modified residue" description="Phosphoarginine" evidence="5">
    <location>
        <position position="115"/>
    </location>
</feature>
<feature type="modified residue" description="Phosphoarginine" evidence="4">
    <location>
        <position position="169"/>
    </location>
</feature>
<feature type="turn" evidence="7">
    <location>
        <begin position="82"/>
        <end position="84"/>
    </location>
</feature>
<feature type="helix" evidence="7">
    <location>
        <begin position="88"/>
        <end position="94"/>
    </location>
</feature>
<feature type="helix" evidence="7">
    <location>
        <begin position="102"/>
        <end position="105"/>
    </location>
</feature>
<feature type="helix" evidence="7">
    <location>
        <begin position="107"/>
        <end position="117"/>
    </location>
</feature>
<feature type="turn" evidence="7">
    <location>
        <begin position="118"/>
        <end position="120"/>
    </location>
</feature>
<feature type="helix" evidence="7">
    <location>
        <begin position="130"/>
        <end position="154"/>
    </location>
</feature>
<feature type="helix" evidence="7">
    <location>
        <begin position="158"/>
        <end position="175"/>
    </location>
</feature>
<reference key="1">
    <citation type="journal article" date="1994" name="DNA Res.">
        <title>Systematic sequencing of the 180 kilobase region of the Bacillus subtilis chromosome containing the replication origin.</title>
        <authorList>
            <person name="Ogasawara N."/>
            <person name="Nakai S."/>
            <person name="Yoshikawa H."/>
        </authorList>
    </citation>
    <scope>NUCLEOTIDE SEQUENCE [GENOMIC DNA]</scope>
    <source>
        <strain>168</strain>
    </source>
</reference>
<reference key="2">
    <citation type="journal article" date="1997" name="Nature">
        <title>The complete genome sequence of the Gram-positive bacterium Bacillus subtilis.</title>
        <authorList>
            <person name="Kunst F."/>
            <person name="Ogasawara N."/>
            <person name="Moszer I."/>
            <person name="Albertini A.M."/>
            <person name="Alloni G."/>
            <person name="Azevedo V."/>
            <person name="Bertero M.G."/>
            <person name="Bessieres P."/>
            <person name="Bolotin A."/>
            <person name="Borchert S."/>
            <person name="Borriss R."/>
            <person name="Boursier L."/>
            <person name="Brans A."/>
            <person name="Braun M."/>
            <person name="Brignell S.C."/>
            <person name="Bron S."/>
            <person name="Brouillet S."/>
            <person name="Bruschi C.V."/>
            <person name="Caldwell B."/>
            <person name="Capuano V."/>
            <person name="Carter N.M."/>
            <person name="Choi S.-K."/>
            <person name="Codani J.-J."/>
            <person name="Connerton I.F."/>
            <person name="Cummings N.J."/>
            <person name="Daniel R.A."/>
            <person name="Denizot F."/>
            <person name="Devine K.M."/>
            <person name="Duesterhoeft A."/>
            <person name="Ehrlich S.D."/>
            <person name="Emmerson P.T."/>
            <person name="Entian K.-D."/>
            <person name="Errington J."/>
            <person name="Fabret C."/>
            <person name="Ferrari E."/>
            <person name="Foulger D."/>
            <person name="Fritz C."/>
            <person name="Fujita M."/>
            <person name="Fujita Y."/>
            <person name="Fuma S."/>
            <person name="Galizzi A."/>
            <person name="Galleron N."/>
            <person name="Ghim S.-Y."/>
            <person name="Glaser P."/>
            <person name="Goffeau A."/>
            <person name="Golightly E.J."/>
            <person name="Grandi G."/>
            <person name="Guiseppi G."/>
            <person name="Guy B.J."/>
            <person name="Haga K."/>
            <person name="Haiech J."/>
            <person name="Harwood C.R."/>
            <person name="Henaut A."/>
            <person name="Hilbert H."/>
            <person name="Holsappel S."/>
            <person name="Hosono S."/>
            <person name="Hullo M.-F."/>
            <person name="Itaya M."/>
            <person name="Jones L.-M."/>
            <person name="Joris B."/>
            <person name="Karamata D."/>
            <person name="Kasahara Y."/>
            <person name="Klaerr-Blanchard M."/>
            <person name="Klein C."/>
            <person name="Kobayashi Y."/>
            <person name="Koetter P."/>
            <person name="Koningstein G."/>
            <person name="Krogh S."/>
            <person name="Kumano M."/>
            <person name="Kurita K."/>
            <person name="Lapidus A."/>
            <person name="Lardinois S."/>
            <person name="Lauber J."/>
            <person name="Lazarevic V."/>
            <person name="Lee S.-M."/>
            <person name="Levine A."/>
            <person name="Liu H."/>
            <person name="Masuda S."/>
            <person name="Mauel C."/>
            <person name="Medigue C."/>
            <person name="Medina N."/>
            <person name="Mellado R.P."/>
            <person name="Mizuno M."/>
            <person name="Moestl D."/>
            <person name="Nakai S."/>
            <person name="Noback M."/>
            <person name="Noone D."/>
            <person name="O'Reilly M."/>
            <person name="Ogawa K."/>
            <person name="Ogiwara A."/>
            <person name="Oudega B."/>
            <person name="Park S.-H."/>
            <person name="Parro V."/>
            <person name="Pohl T.M."/>
            <person name="Portetelle D."/>
            <person name="Porwollik S."/>
            <person name="Prescott A.M."/>
            <person name="Presecan E."/>
            <person name="Pujic P."/>
            <person name="Purnelle B."/>
            <person name="Rapoport G."/>
            <person name="Rey M."/>
            <person name="Reynolds S."/>
            <person name="Rieger M."/>
            <person name="Rivolta C."/>
            <person name="Rocha E."/>
            <person name="Roche B."/>
            <person name="Rose M."/>
            <person name="Sadaie Y."/>
            <person name="Sato T."/>
            <person name="Scanlan E."/>
            <person name="Schleich S."/>
            <person name="Schroeter R."/>
            <person name="Scoffone F."/>
            <person name="Sekiguchi J."/>
            <person name="Sekowska A."/>
            <person name="Seror S.J."/>
            <person name="Serror P."/>
            <person name="Shin B.-S."/>
            <person name="Soldo B."/>
            <person name="Sorokin A."/>
            <person name="Tacconi E."/>
            <person name="Takagi T."/>
            <person name="Takahashi H."/>
            <person name="Takemaru K."/>
            <person name="Takeuchi M."/>
            <person name="Tamakoshi A."/>
            <person name="Tanaka T."/>
            <person name="Terpstra P."/>
            <person name="Tognoni A."/>
            <person name="Tosato V."/>
            <person name="Uchiyama S."/>
            <person name="Vandenbol M."/>
            <person name="Vannier F."/>
            <person name="Vassarotti A."/>
            <person name="Viari A."/>
            <person name="Wambutt R."/>
            <person name="Wedler E."/>
            <person name="Wedler H."/>
            <person name="Weitzenegger T."/>
            <person name="Winters P."/>
            <person name="Wipat A."/>
            <person name="Yamamoto H."/>
            <person name="Yamane K."/>
            <person name="Yasumoto K."/>
            <person name="Yata K."/>
            <person name="Yoshida K."/>
            <person name="Yoshikawa H.-F."/>
            <person name="Zumstein E."/>
            <person name="Yoshikawa H."/>
            <person name="Danchin A."/>
        </authorList>
    </citation>
    <scope>NUCLEOTIDE SEQUENCE [LARGE SCALE GENOMIC DNA]</scope>
    <source>
        <strain>168</strain>
    </source>
</reference>
<reference key="3">
    <citation type="journal article" date="1999" name="Mol. Microbiol.">
        <title>CtsR, a novel regulator of stress and heat shock response, controls clp and molecular chaperone gene expression in gram-positive bacteria.</title>
        <authorList>
            <person name="Derre I."/>
            <person name="Rapoport G."/>
            <person name="Msadek T."/>
        </authorList>
    </citation>
    <scope>REPRESSION BY CTSR</scope>
</reference>
<reference key="4">
    <citation type="journal article" date="2001" name="EMBO J.">
        <title>Clp-mediated proteolysis in Gram-positive bacteria is autoregulated by the stability of a repressor.</title>
        <authorList>
            <person name="Kruger E."/>
            <person name="Zuhlke D."/>
            <person name="Witt E."/>
            <person name="Ludwig H."/>
            <person name="Hecker M."/>
        </authorList>
    </citation>
    <scope>GENE NAME</scope>
    <source>
        <strain>168 / IS58</strain>
    </source>
</reference>
<reference key="5">
    <citation type="journal article" date="2005" name="EMBO J.">
        <title>A tyrosine kinase and its activator control the activity of the CtsR heat shock repressor in B. subtilis.</title>
        <authorList>
            <person name="Kirstein J."/>
            <person name="Zuhlke D."/>
            <person name="Gerth U."/>
            <person name="Turgay K."/>
            <person name="Hecker M."/>
        </authorList>
    </citation>
    <scope>FUNCTION</scope>
    <scope>INTERACTION WITH MCSB</scope>
    <source>
        <strain>168</strain>
    </source>
</reference>
<reference key="6">
    <citation type="journal article" date="2009" name="Mol. Microbiol.">
        <title>McsA and B mediate the delocalization of competence proteins from the cell poles of Bacillus subtilis.</title>
        <authorList>
            <person name="Hahn J."/>
            <person name="Kramer N."/>
            <person name="Briley K. Jr."/>
            <person name="Dubnau D."/>
        </authorList>
    </citation>
    <scope>FUNCTION</scope>
    <scope>DISRUPTION PHENOTYPE</scope>
    <source>
        <strain>168 / BD630</strain>
    </source>
</reference>
<reference key="7">
    <citation type="journal article" date="2012" name="Proc. Natl. Acad. Sci. U.S.A.">
        <title>Global impact of protein arginine phosphorylation on the physiology of Bacillus subtilis.</title>
        <authorList>
            <person name="Elsholz A.K."/>
            <person name="Turgay K."/>
            <person name="Michalik S."/>
            <person name="Hessling B."/>
            <person name="Gronau K."/>
            <person name="Oertel D."/>
            <person name="Mader U."/>
            <person name="Bernhardt J."/>
            <person name="Becher D."/>
            <person name="Hecker M."/>
            <person name="Gerth U."/>
        </authorList>
    </citation>
    <scope>IDENTIFICATION BY MASS SPECTROMETRY</scope>
    <scope>PHOSPHORYLATION AT ARG-169</scope>
    <source>
        <strain>168</strain>
    </source>
</reference>
<reference key="8">
    <citation type="journal article" date="2014" name="Mol. Cell. Proteomics">
        <title>Quantitative phosphoproteomics reveals the role of protein arginine phosphorylation in the bacterial stress response.</title>
        <authorList>
            <person name="Schmidt A."/>
            <person name="Trentini D.B."/>
            <person name="Spiess S."/>
            <person name="Fuhrmann J."/>
            <person name="Ammerer G."/>
            <person name="Mechtler K."/>
            <person name="Clausen T."/>
        </authorList>
    </citation>
    <scope>IDENTIFICATION BY MASS SPECTROMETRY</scope>
    <scope>PHOSPHORYLATION AT ARG-115</scope>
    <source>
        <strain>168</strain>
    </source>
</reference>
<keyword id="KW-0002">3D-structure</keyword>
<keyword id="KW-0597">Phosphoprotein</keyword>
<keyword id="KW-1185">Reference proteome</keyword>
<accession>P37569</accession>
<gene>
    <name type="primary">mcsA</name>
    <name type="synonym">yacH</name>
    <name type="ordered locus">BSU00840</name>
</gene>
<organism>
    <name type="scientific">Bacillus subtilis (strain 168)</name>
    <dbReference type="NCBI Taxonomy" id="224308"/>
    <lineage>
        <taxon>Bacteria</taxon>
        <taxon>Bacillati</taxon>
        <taxon>Bacillota</taxon>
        <taxon>Bacilli</taxon>
        <taxon>Bacillales</taxon>
        <taxon>Bacillaceae</taxon>
        <taxon>Bacillus</taxon>
    </lineage>
</organism>
<comment type="function">
    <text evidence="2 3">Activates the phosphorylation activity of the protein-arginine kinase McsB. Is required for the delocalization of competence proteins from the cell poles.</text>
</comment>
<comment type="subunit">
    <text evidence="2">Interacts with McsB.</text>
</comment>
<comment type="induction">
    <text evidence="6">Is repressed by the transcriptional regulator CtsR. Forms part of an operon with ctsR, mcsB and clpC.</text>
</comment>
<comment type="PTM">
    <text evidence="4 5">Phosphorylated on Arg residues by McsB.</text>
</comment>
<comment type="disruption phenotype">
    <text evidence="3">Cells lacking this gene show a defect in the delocalization of competence proteins.</text>
</comment>